<reference key="1">
    <citation type="journal article" date="2009" name="BMC Genomics">
        <title>Evidence for niche adaptation in the genome of the bovine pathogen Streptococcus uberis.</title>
        <authorList>
            <person name="Ward P.N."/>
            <person name="Holden M.T.G."/>
            <person name="Leigh J.A."/>
            <person name="Lennard N."/>
            <person name="Bignell A."/>
            <person name="Barron A."/>
            <person name="Clark L."/>
            <person name="Quail M.A."/>
            <person name="Woodward J."/>
            <person name="Barrell B.G."/>
            <person name="Egan S.A."/>
            <person name="Field T.R."/>
            <person name="Maskell D."/>
            <person name="Kehoe M."/>
            <person name="Dowson C.G."/>
            <person name="Chanter N."/>
            <person name="Whatmore A.M."/>
            <person name="Bentley S.D."/>
            <person name="Parkhill J."/>
        </authorList>
    </citation>
    <scope>NUCLEOTIDE SEQUENCE [LARGE SCALE GENOMIC DNA]</scope>
    <source>
        <strain>ATCC BAA-854 / 0140J</strain>
    </source>
</reference>
<keyword id="KW-1003">Cell membrane</keyword>
<keyword id="KW-0472">Membrane</keyword>
<keyword id="KW-1185">Reference proteome</keyword>
<keyword id="KW-0812">Transmembrane</keyword>
<keyword id="KW-1133">Transmembrane helix</keyword>
<proteinExistence type="inferred from homology"/>
<name>Y313_STRU0</name>
<accession>B9DTI6</accession>
<comment type="subcellular location">
    <subcellularLocation>
        <location evidence="1">Cell membrane</location>
        <topology evidence="1">Multi-pass membrane protein</topology>
    </subcellularLocation>
</comment>
<comment type="similarity">
    <text evidence="1">Belongs to the UPF0397 family.</text>
</comment>
<dbReference type="EMBL" id="AM946015">
    <property type="protein sequence ID" value="CAR40876.1"/>
    <property type="molecule type" value="Genomic_DNA"/>
</dbReference>
<dbReference type="RefSeq" id="WP_012657856.1">
    <property type="nucleotide sequence ID" value="NC_012004.1"/>
</dbReference>
<dbReference type="STRING" id="218495.SUB0313"/>
<dbReference type="KEGG" id="sub:SUB0313"/>
<dbReference type="eggNOG" id="COG4720">
    <property type="taxonomic scope" value="Bacteria"/>
</dbReference>
<dbReference type="HOGENOM" id="CLU_120023_0_0_9"/>
<dbReference type="OrthoDB" id="4550662at2"/>
<dbReference type="Proteomes" id="UP000000449">
    <property type="component" value="Chromosome"/>
</dbReference>
<dbReference type="GO" id="GO:0005886">
    <property type="term" value="C:plasma membrane"/>
    <property type="evidence" value="ECO:0007669"/>
    <property type="project" value="UniProtKB-SubCell"/>
</dbReference>
<dbReference type="Gene3D" id="1.10.1760.20">
    <property type="match status" value="1"/>
</dbReference>
<dbReference type="HAMAP" id="MF_01572">
    <property type="entry name" value="UPF0397"/>
    <property type="match status" value="1"/>
</dbReference>
<dbReference type="InterPro" id="IPR009825">
    <property type="entry name" value="ECF_substrate-spec-like"/>
</dbReference>
<dbReference type="InterPro" id="IPR022914">
    <property type="entry name" value="UPF0397"/>
</dbReference>
<dbReference type="NCBIfam" id="NF010182">
    <property type="entry name" value="PRK13661.1"/>
    <property type="match status" value="1"/>
</dbReference>
<dbReference type="PANTHER" id="PTHR37815">
    <property type="entry name" value="UPF0397 PROTEIN BC_2624-RELATED"/>
    <property type="match status" value="1"/>
</dbReference>
<dbReference type="PANTHER" id="PTHR37815:SF3">
    <property type="entry name" value="UPF0397 PROTEIN SPR0429"/>
    <property type="match status" value="1"/>
</dbReference>
<dbReference type="Pfam" id="PF07155">
    <property type="entry name" value="ECF-ribofla_trS"/>
    <property type="match status" value="1"/>
</dbReference>
<protein>
    <recommendedName>
        <fullName evidence="1">UPF0397 protein SUB0313</fullName>
    </recommendedName>
</protein>
<feature type="chain" id="PRO_1000185571" description="UPF0397 protein SUB0313">
    <location>
        <begin position="1"/>
        <end position="181"/>
    </location>
</feature>
<feature type="transmembrane region" description="Helical" evidence="1">
    <location>
        <begin position="11"/>
        <end position="31"/>
    </location>
</feature>
<feature type="transmembrane region" description="Helical" evidence="1">
    <location>
        <begin position="45"/>
        <end position="65"/>
    </location>
</feature>
<feature type="transmembrane region" description="Helical" evidence="1">
    <location>
        <begin position="69"/>
        <end position="89"/>
    </location>
</feature>
<feature type="transmembrane region" description="Helical" evidence="1">
    <location>
        <begin position="114"/>
        <end position="134"/>
    </location>
</feature>
<feature type="transmembrane region" description="Helical" evidence="1">
    <location>
        <begin position="147"/>
        <end position="167"/>
    </location>
</feature>
<organism>
    <name type="scientific">Streptococcus uberis (strain ATCC BAA-854 / 0140J)</name>
    <dbReference type="NCBI Taxonomy" id="218495"/>
    <lineage>
        <taxon>Bacteria</taxon>
        <taxon>Bacillati</taxon>
        <taxon>Bacillota</taxon>
        <taxon>Bacilli</taxon>
        <taxon>Lactobacillales</taxon>
        <taxon>Streptococcaceae</taxon>
        <taxon>Streptococcus</taxon>
    </lineage>
</organism>
<evidence type="ECO:0000255" key="1">
    <source>
        <dbReference type="HAMAP-Rule" id="MF_01572"/>
    </source>
</evidence>
<sequence length="181" mass="19431">MKNTSIKTVVAIGIGAALFVIIGLFVPITIFTNTTISLQYAVQALFSVLFGPVAGFFIGFIGHMLKDMFAGYGVWWSWVLPSGLVGLGIGSLKNRLKVDKGIFSKKDILSFNLVQALVNLISWAIVAPLGDILIYQEPANKVFTQGLFAAFANTFTIGIGGTLLLIAYANSRPKAGSLRKD</sequence>
<gene>
    <name type="ordered locus">SUB0313</name>
</gene>